<evidence type="ECO:0000255" key="1">
    <source>
        <dbReference type="HAMAP-Rule" id="MF_01445"/>
    </source>
</evidence>
<name>TSAD_PHYAS</name>
<reference key="1">
    <citation type="journal article" date="2008" name="J. Bacteriol.">
        <title>Comparative genome analysis of 'Candidatus Phytoplasma australiense' (subgroup tuf-Australia I; rp-A) and 'Ca. Phytoplasma asteris' strains OY-M and AY-WB.</title>
        <authorList>
            <person name="Tran-Nguyen L.T."/>
            <person name="Kube M."/>
            <person name="Schneider B."/>
            <person name="Reinhardt R."/>
            <person name="Gibb K.S."/>
        </authorList>
    </citation>
    <scope>NUCLEOTIDE SEQUENCE [LARGE SCALE GENOMIC DNA]</scope>
</reference>
<sequence>MNILSIETSCDETSVAITQDGKKVLSNIVFSQIKDHQMFGGVVPEIASRKHVELITLILEKAFQKACLTPQEIDLVAVTQGPGLVGSLLVGINAANVFAYTYQKPLLGINHLLGHLYAAQIEHQIKPNALILLVSGGHTELLHFKNHDQIEVLGTTLDDALGEVYDKIAKALHLGYPGGPLIDQLAQTGKDTYHLVRPYLKNNNFNFSFSGLKSHLVNLLLKQNIQDLNIPNICASFQASVIDVLLTKTKRVLKKLPIQQLIVTGGVASNSALRKKMKETFLDLEVIFPSVQYCTDQAAMIGIAAFYQKNITPPSYKYDLTALPNLTF</sequence>
<feature type="chain" id="PRO_1000192690" description="tRNA N6-adenosine threonylcarbamoyltransferase">
    <location>
        <begin position="1"/>
        <end position="328"/>
    </location>
</feature>
<feature type="binding site" evidence="1">
    <location>
        <position position="111"/>
    </location>
    <ligand>
        <name>Fe cation</name>
        <dbReference type="ChEBI" id="CHEBI:24875"/>
    </ligand>
</feature>
<feature type="binding site" evidence="1">
    <location>
        <position position="115"/>
    </location>
    <ligand>
        <name>Fe cation</name>
        <dbReference type="ChEBI" id="CHEBI:24875"/>
    </ligand>
</feature>
<feature type="binding site" evidence="1">
    <location>
        <begin position="133"/>
        <end position="137"/>
    </location>
    <ligand>
        <name>substrate</name>
    </ligand>
</feature>
<feature type="binding site" evidence="1">
    <location>
        <position position="166"/>
    </location>
    <ligand>
        <name>substrate</name>
    </ligand>
</feature>
<feature type="binding site" evidence="1">
    <location>
        <position position="179"/>
    </location>
    <ligand>
        <name>substrate</name>
    </ligand>
</feature>
<feature type="binding site" evidence="1">
    <location>
        <position position="183"/>
    </location>
    <ligand>
        <name>substrate</name>
    </ligand>
</feature>
<feature type="binding site" evidence="1">
    <location>
        <position position="270"/>
    </location>
    <ligand>
        <name>substrate</name>
    </ligand>
</feature>
<feature type="binding site" evidence="1">
    <location>
        <position position="296"/>
    </location>
    <ligand>
        <name>Fe cation</name>
        <dbReference type="ChEBI" id="CHEBI:24875"/>
    </ligand>
</feature>
<keyword id="KW-0012">Acyltransferase</keyword>
<keyword id="KW-0963">Cytoplasm</keyword>
<keyword id="KW-0408">Iron</keyword>
<keyword id="KW-0479">Metal-binding</keyword>
<keyword id="KW-1185">Reference proteome</keyword>
<keyword id="KW-0808">Transferase</keyword>
<keyword id="KW-0819">tRNA processing</keyword>
<dbReference type="EC" id="2.3.1.234" evidence="1"/>
<dbReference type="EMBL" id="AM422018">
    <property type="protein sequence ID" value="CAM11428.1"/>
    <property type="molecule type" value="Genomic_DNA"/>
</dbReference>
<dbReference type="SMR" id="B1V8Z6"/>
<dbReference type="STRING" id="59748.PA0093"/>
<dbReference type="KEGG" id="pal:PA0093"/>
<dbReference type="eggNOG" id="COG0533">
    <property type="taxonomic scope" value="Bacteria"/>
</dbReference>
<dbReference type="Proteomes" id="UP000008323">
    <property type="component" value="Chromosome"/>
</dbReference>
<dbReference type="GO" id="GO:0005737">
    <property type="term" value="C:cytoplasm"/>
    <property type="evidence" value="ECO:0007669"/>
    <property type="project" value="UniProtKB-SubCell"/>
</dbReference>
<dbReference type="GO" id="GO:0005506">
    <property type="term" value="F:iron ion binding"/>
    <property type="evidence" value="ECO:0007669"/>
    <property type="project" value="UniProtKB-UniRule"/>
</dbReference>
<dbReference type="GO" id="GO:0061711">
    <property type="term" value="F:N(6)-L-threonylcarbamoyladenine synthase activity"/>
    <property type="evidence" value="ECO:0007669"/>
    <property type="project" value="UniProtKB-EC"/>
</dbReference>
<dbReference type="GO" id="GO:0002949">
    <property type="term" value="P:tRNA threonylcarbamoyladenosine modification"/>
    <property type="evidence" value="ECO:0007669"/>
    <property type="project" value="UniProtKB-UniRule"/>
</dbReference>
<dbReference type="CDD" id="cd24133">
    <property type="entry name" value="ASKHA_NBD_TsaD_bac"/>
    <property type="match status" value="1"/>
</dbReference>
<dbReference type="FunFam" id="3.30.420.40:FF:000012">
    <property type="entry name" value="tRNA N6-adenosine threonylcarbamoyltransferase"/>
    <property type="match status" value="1"/>
</dbReference>
<dbReference type="FunFam" id="3.30.420.40:FF:000040">
    <property type="entry name" value="tRNA N6-adenosine threonylcarbamoyltransferase"/>
    <property type="match status" value="1"/>
</dbReference>
<dbReference type="Gene3D" id="3.30.420.40">
    <property type="match status" value="2"/>
</dbReference>
<dbReference type="HAMAP" id="MF_01445">
    <property type="entry name" value="TsaD"/>
    <property type="match status" value="1"/>
</dbReference>
<dbReference type="InterPro" id="IPR043129">
    <property type="entry name" value="ATPase_NBD"/>
</dbReference>
<dbReference type="InterPro" id="IPR000905">
    <property type="entry name" value="Gcp-like_dom"/>
</dbReference>
<dbReference type="InterPro" id="IPR017861">
    <property type="entry name" value="KAE1/TsaD"/>
</dbReference>
<dbReference type="InterPro" id="IPR022450">
    <property type="entry name" value="TsaD"/>
</dbReference>
<dbReference type="NCBIfam" id="TIGR00329">
    <property type="entry name" value="gcp_kae1"/>
    <property type="match status" value="1"/>
</dbReference>
<dbReference type="NCBIfam" id="TIGR03723">
    <property type="entry name" value="T6A_TsaD_YgjD"/>
    <property type="match status" value="1"/>
</dbReference>
<dbReference type="PANTHER" id="PTHR11735">
    <property type="entry name" value="TRNA N6-ADENOSINE THREONYLCARBAMOYLTRANSFERASE"/>
    <property type="match status" value="1"/>
</dbReference>
<dbReference type="PANTHER" id="PTHR11735:SF6">
    <property type="entry name" value="TRNA N6-ADENOSINE THREONYLCARBAMOYLTRANSFERASE, MITOCHONDRIAL"/>
    <property type="match status" value="1"/>
</dbReference>
<dbReference type="Pfam" id="PF00814">
    <property type="entry name" value="TsaD"/>
    <property type="match status" value="1"/>
</dbReference>
<dbReference type="PRINTS" id="PR00789">
    <property type="entry name" value="OSIALOPTASE"/>
</dbReference>
<dbReference type="SUPFAM" id="SSF53067">
    <property type="entry name" value="Actin-like ATPase domain"/>
    <property type="match status" value="1"/>
</dbReference>
<organism>
    <name type="scientific">Phytoplasma australiense</name>
    <dbReference type="NCBI Taxonomy" id="59748"/>
    <lineage>
        <taxon>Bacteria</taxon>
        <taxon>Bacillati</taxon>
        <taxon>Mycoplasmatota</taxon>
        <taxon>Mollicutes</taxon>
        <taxon>Acholeplasmatales</taxon>
        <taxon>Acholeplasmataceae</taxon>
        <taxon>Candidatus Phytoplasma</taxon>
        <taxon>16SrXII (Stolbur group)</taxon>
    </lineage>
</organism>
<proteinExistence type="inferred from homology"/>
<comment type="function">
    <text evidence="1">Required for the formation of a threonylcarbamoyl group on adenosine at position 37 (t(6)A37) in tRNAs that read codons beginning with adenine. Is involved in the transfer of the threonylcarbamoyl moiety of threonylcarbamoyl-AMP (TC-AMP) to the N6 group of A37, together with TsaE and TsaB. TsaD likely plays a direct catalytic role in this reaction.</text>
</comment>
<comment type="catalytic activity">
    <reaction evidence="1">
        <text>L-threonylcarbamoyladenylate + adenosine(37) in tRNA = N(6)-L-threonylcarbamoyladenosine(37) in tRNA + AMP + H(+)</text>
        <dbReference type="Rhea" id="RHEA:37059"/>
        <dbReference type="Rhea" id="RHEA-COMP:10162"/>
        <dbReference type="Rhea" id="RHEA-COMP:10163"/>
        <dbReference type="ChEBI" id="CHEBI:15378"/>
        <dbReference type="ChEBI" id="CHEBI:73682"/>
        <dbReference type="ChEBI" id="CHEBI:74411"/>
        <dbReference type="ChEBI" id="CHEBI:74418"/>
        <dbReference type="ChEBI" id="CHEBI:456215"/>
        <dbReference type="EC" id="2.3.1.234"/>
    </reaction>
</comment>
<comment type="cofactor">
    <cofactor evidence="1">
        <name>Fe(2+)</name>
        <dbReference type="ChEBI" id="CHEBI:29033"/>
    </cofactor>
    <text evidence="1">Binds 1 Fe(2+) ion per subunit.</text>
</comment>
<comment type="subcellular location">
    <subcellularLocation>
        <location evidence="1">Cytoplasm</location>
    </subcellularLocation>
</comment>
<comment type="similarity">
    <text evidence="1">Belongs to the KAE1 / TsaD family.</text>
</comment>
<protein>
    <recommendedName>
        <fullName evidence="1">tRNA N6-adenosine threonylcarbamoyltransferase</fullName>
        <ecNumber evidence="1">2.3.1.234</ecNumber>
    </recommendedName>
    <alternativeName>
        <fullName evidence="1">N6-L-threonylcarbamoyladenine synthase</fullName>
        <shortName evidence="1">t(6)A synthase</shortName>
    </alternativeName>
    <alternativeName>
        <fullName evidence="1">t(6)A37 threonylcarbamoyladenosine biosynthesis protein TsaD</fullName>
    </alternativeName>
    <alternativeName>
        <fullName evidence="1">tRNA threonylcarbamoyladenosine biosynthesis protein TsaD</fullName>
    </alternativeName>
</protein>
<gene>
    <name evidence="1" type="primary">tsaD</name>
    <name type="synonym">gcp</name>
    <name type="ordered locus">PA0093</name>
</gene>
<accession>B1V8Z6</accession>